<protein>
    <recommendedName>
        <fullName evidence="1">tRNA dimethylallyltransferase</fullName>
        <ecNumber evidence="1">2.5.1.75</ecNumber>
    </recommendedName>
    <alternativeName>
        <fullName evidence="1">Dimethylallyl diphosphate:tRNA dimethylallyltransferase</fullName>
        <shortName evidence="1">DMAPP:tRNA dimethylallyltransferase</shortName>
        <shortName evidence="1">DMATase</shortName>
    </alternativeName>
    <alternativeName>
        <fullName evidence="1">Isopentenyl-diphosphate:tRNA isopentenyltransferase</fullName>
        <shortName evidence="1">IPP transferase</shortName>
        <shortName evidence="1">IPPT</shortName>
        <shortName evidence="1">IPTase</shortName>
    </alternativeName>
</protein>
<feature type="chain" id="PRO_1000098666" description="tRNA dimethylallyltransferase">
    <location>
        <begin position="1"/>
        <end position="308"/>
    </location>
</feature>
<feature type="region of interest" description="Interaction with substrate tRNA" evidence="1">
    <location>
        <begin position="35"/>
        <end position="38"/>
    </location>
</feature>
<feature type="region of interest" description="Interaction with substrate tRNA" evidence="1">
    <location>
        <begin position="159"/>
        <end position="163"/>
    </location>
</feature>
<feature type="binding site" evidence="1">
    <location>
        <begin position="10"/>
        <end position="17"/>
    </location>
    <ligand>
        <name>ATP</name>
        <dbReference type="ChEBI" id="CHEBI:30616"/>
    </ligand>
</feature>
<feature type="binding site" evidence="1">
    <location>
        <begin position="12"/>
        <end position="17"/>
    </location>
    <ligand>
        <name>substrate</name>
    </ligand>
</feature>
<feature type="site" description="Interaction with substrate tRNA" evidence="1">
    <location>
        <position position="101"/>
    </location>
</feature>
<feature type="site" description="Interaction with substrate tRNA" evidence="1">
    <location>
        <position position="123"/>
    </location>
</feature>
<proteinExistence type="inferred from homology"/>
<name>MIAA_FRATM</name>
<gene>
    <name evidence="1" type="primary">miaA</name>
    <name type="ordered locus">FTM_0704</name>
</gene>
<evidence type="ECO:0000255" key="1">
    <source>
        <dbReference type="HAMAP-Rule" id="MF_00185"/>
    </source>
</evidence>
<sequence>MSKLIYGLAGPTASGKTSLSILLAKKINAEIISVDSSLVYKGMDIGTAKPTLQEQDGIKHHLIDIIEPTGNFSVADFISSVNKLKKEIWARGREVLLVGGTMLYFKGLIEGLSALPESQAEIREALEYQKKAKGLQYLHQQLNEIDPQSAQKINPNDQQRIFRALEVIMISGKKYSELVKTSKVGGLDEDLKLCALVPNDRSILHKNIESRFRQMLDQGFLDEVQNLHKNPMLTKETTAIRSVGYRQAWEYLDGDISYDEFVKKGIVATRQLAKRQLTWIRNWQSSINIVAMENETKELDILKYFGYK</sequence>
<dbReference type="EC" id="2.5.1.75" evidence="1"/>
<dbReference type="EMBL" id="CP000915">
    <property type="protein sequence ID" value="ACD30682.1"/>
    <property type="molecule type" value="Genomic_DNA"/>
</dbReference>
<dbReference type="SMR" id="B2SG23"/>
<dbReference type="KEGG" id="ftm:FTM_0704"/>
<dbReference type="HOGENOM" id="CLU_032616_0_0_6"/>
<dbReference type="GO" id="GO:0005524">
    <property type="term" value="F:ATP binding"/>
    <property type="evidence" value="ECO:0007669"/>
    <property type="project" value="UniProtKB-UniRule"/>
</dbReference>
<dbReference type="GO" id="GO:0052381">
    <property type="term" value="F:tRNA dimethylallyltransferase activity"/>
    <property type="evidence" value="ECO:0007669"/>
    <property type="project" value="UniProtKB-UniRule"/>
</dbReference>
<dbReference type="GO" id="GO:0006400">
    <property type="term" value="P:tRNA modification"/>
    <property type="evidence" value="ECO:0007669"/>
    <property type="project" value="TreeGrafter"/>
</dbReference>
<dbReference type="FunFam" id="1.10.20.140:FF:000001">
    <property type="entry name" value="tRNA dimethylallyltransferase"/>
    <property type="match status" value="1"/>
</dbReference>
<dbReference type="Gene3D" id="1.10.20.140">
    <property type="match status" value="1"/>
</dbReference>
<dbReference type="Gene3D" id="3.40.50.300">
    <property type="entry name" value="P-loop containing nucleotide triphosphate hydrolases"/>
    <property type="match status" value="1"/>
</dbReference>
<dbReference type="HAMAP" id="MF_00185">
    <property type="entry name" value="IPP_trans"/>
    <property type="match status" value="1"/>
</dbReference>
<dbReference type="InterPro" id="IPR039657">
    <property type="entry name" value="Dimethylallyltransferase"/>
</dbReference>
<dbReference type="InterPro" id="IPR018022">
    <property type="entry name" value="IPT"/>
</dbReference>
<dbReference type="InterPro" id="IPR027417">
    <property type="entry name" value="P-loop_NTPase"/>
</dbReference>
<dbReference type="NCBIfam" id="TIGR00174">
    <property type="entry name" value="miaA"/>
    <property type="match status" value="1"/>
</dbReference>
<dbReference type="PANTHER" id="PTHR11088">
    <property type="entry name" value="TRNA DIMETHYLALLYLTRANSFERASE"/>
    <property type="match status" value="1"/>
</dbReference>
<dbReference type="PANTHER" id="PTHR11088:SF60">
    <property type="entry name" value="TRNA DIMETHYLALLYLTRANSFERASE"/>
    <property type="match status" value="1"/>
</dbReference>
<dbReference type="Pfam" id="PF01715">
    <property type="entry name" value="IPPT"/>
    <property type="match status" value="1"/>
</dbReference>
<dbReference type="SUPFAM" id="SSF52540">
    <property type="entry name" value="P-loop containing nucleoside triphosphate hydrolases"/>
    <property type="match status" value="1"/>
</dbReference>
<organism>
    <name type="scientific">Francisella tularensis subsp. mediasiatica (strain FSC147)</name>
    <dbReference type="NCBI Taxonomy" id="441952"/>
    <lineage>
        <taxon>Bacteria</taxon>
        <taxon>Pseudomonadati</taxon>
        <taxon>Pseudomonadota</taxon>
        <taxon>Gammaproteobacteria</taxon>
        <taxon>Thiotrichales</taxon>
        <taxon>Francisellaceae</taxon>
        <taxon>Francisella</taxon>
    </lineage>
</organism>
<comment type="function">
    <text evidence="1">Catalyzes the transfer of a dimethylallyl group onto the adenine at position 37 in tRNAs that read codons beginning with uridine, leading to the formation of N6-(dimethylallyl)adenosine (i(6)A).</text>
</comment>
<comment type="catalytic activity">
    <reaction evidence="1">
        <text>adenosine(37) in tRNA + dimethylallyl diphosphate = N(6)-dimethylallyladenosine(37) in tRNA + diphosphate</text>
        <dbReference type="Rhea" id="RHEA:26482"/>
        <dbReference type="Rhea" id="RHEA-COMP:10162"/>
        <dbReference type="Rhea" id="RHEA-COMP:10375"/>
        <dbReference type="ChEBI" id="CHEBI:33019"/>
        <dbReference type="ChEBI" id="CHEBI:57623"/>
        <dbReference type="ChEBI" id="CHEBI:74411"/>
        <dbReference type="ChEBI" id="CHEBI:74415"/>
        <dbReference type="EC" id="2.5.1.75"/>
    </reaction>
</comment>
<comment type="cofactor">
    <cofactor evidence="1">
        <name>Mg(2+)</name>
        <dbReference type="ChEBI" id="CHEBI:18420"/>
    </cofactor>
</comment>
<comment type="subunit">
    <text evidence="1">Monomer.</text>
</comment>
<comment type="similarity">
    <text evidence="1">Belongs to the IPP transferase family.</text>
</comment>
<accession>B2SG23</accession>
<keyword id="KW-0067">ATP-binding</keyword>
<keyword id="KW-0460">Magnesium</keyword>
<keyword id="KW-0547">Nucleotide-binding</keyword>
<keyword id="KW-0808">Transferase</keyword>
<keyword id="KW-0819">tRNA processing</keyword>
<reference key="1">
    <citation type="journal article" date="2009" name="PLoS Pathog.">
        <title>Molecular evolutionary consequences of niche restriction in Francisella tularensis, a facultative intracellular pathogen.</title>
        <authorList>
            <person name="Larsson P."/>
            <person name="Elfsmark D."/>
            <person name="Svensson K."/>
            <person name="Wikstroem P."/>
            <person name="Forsman M."/>
            <person name="Brettin T."/>
            <person name="Keim P."/>
            <person name="Johansson A."/>
        </authorList>
    </citation>
    <scope>NUCLEOTIDE SEQUENCE [LARGE SCALE GENOMIC DNA]</scope>
    <source>
        <strain>FSC147</strain>
    </source>
</reference>